<comment type="catalytic activity">
    <reaction>
        <text>L-seryl-[protein] + ATP = O-phospho-L-seryl-[protein] + ADP + H(+)</text>
        <dbReference type="Rhea" id="RHEA:17989"/>
        <dbReference type="Rhea" id="RHEA-COMP:9863"/>
        <dbReference type="Rhea" id="RHEA-COMP:11604"/>
        <dbReference type="ChEBI" id="CHEBI:15378"/>
        <dbReference type="ChEBI" id="CHEBI:29999"/>
        <dbReference type="ChEBI" id="CHEBI:30616"/>
        <dbReference type="ChEBI" id="CHEBI:83421"/>
        <dbReference type="ChEBI" id="CHEBI:456216"/>
        <dbReference type="EC" id="2.7.11.1"/>
    </reaction>
</comment>
<comment type="catalytic activity">
    <reaction>
        <text>L-threonyl-[protein] + ATP = O-phospho-L-threonyl-[protein] + ADP + H(+)</text>
        <dbReference type="Rhea" id="RHEA:46608"/>
        <dbReference type="Rhea" id="RHEA-COMP:11060"/>
        <dbReference type="Rhea" id="RHEA-COMP:11605"/>
        <dbReference type="ChEBI" id="CHEBI:15378"/>
        <dbReference type="ChEBI" id="CHEBI:30013"/>
        <dbReference type="ChEBI" id="CHEBI:30616"/>
        <dbReference type="ChEBI" id="CHEBI:61977"/>
        <dbReference type="ChEBI" id="CHEBI:456216"/>
        <dbReference type="EC" id="2.7.11.1"/>
    </reaction>
</comment>
<comment type="similarity">
    <text evidence="5">Belongs to the protein kinase superfamily. AGC Ser/Thr protein kinase family.</text>
</comment>
<accession>Q8MYF1</accession>
<accession>Q54ZJ3</accession>
<dbReference type="EC" id="2.7.11.1"/>
<dbReference type="EMBL" id="AAFI02000020">
    <property type="protein sequence ID" value="EAL68687.1"/>
    <property type="molecule type" value="Genomic_DNA"/>
</dbReference>
<dbReference type="RefSeq" id="XP_642649.1">
    <property type="nucleotide sequence ID" value="XM_637557.1"/>
</dbReference>
<dbReference type="SMR" id="Q8MYF1"/>
<dbReference type="FunCoup" id="Q8MYF1">
    <property type="interactions" value="34"/>
</dbReference>
<dbReference type="STRING" id="44689.Q8MYF1"/>
<dbReference type="PaxDb" id="44689-DDB0220702"/>
<dbReference type="EnsemblProtists" id="EAL68687">
    <property type="protein sequence ID" value="EAL68687"/>
    <property type="gene ID" value="DDB_G0277449"/>
</dbReference>
<dbReference type="GeneID" id="8621065"/>
<dbReference type="KEGG" id="ddi:DDB_G0277449"/>
<dbReference type="dictyBase" id="DDB_G0277449"/>
<dbReference type="VEuPathDB" id="AmoebaDB:DDB_G0277449"/>
<dbReference type="eggNOG" id="KOG0598">
    <property type="taxonomic scope" value="Eukaryota"/>
</dbReference>
<dbReference type="HOGENOM" id="CLU_000288_63_5_1"/>
<dbReference type="InParanoid" id="Q8MYF1"/>
<dbReference type="OMA" id="VHTMNER"/>
<dbReference type="PhylomeDB" id="Q8MYF1"/>
<dbReference type="Reactome" id="R-DDI-166208">
    <property type="pathway name" value="mTORC1-mediated signalling"/>
</dbReference>
<dbReference type="Reactome" id="R-DDI-198693">
    <property type="pathway name" value="AKT phosphorylates targets in the nucleus"/>
</dbReference>
<dbReference type="Reactome" id="R-DDI-198753">
    <property type="pathway name" value="ERK/MAPK targets"/>
</dbReference>
<dbReference type="Reactome" id="R-DDI-2559582">
    <property type="pathway name" value="Senescence-Associated Secretory Phenotype (SASP)"/>
</dbReference>
<dbReference type="Reactome" id="R-DDI-375165">
    <property type="pathway name" value="NCAM signaling for neurite out-growth"/>
</dbReference>
<dbReference type="Reactome" id="R-DDI-444257">
    <property type="pathway name" value="RSK activation"/>
</dbReference>
<dbReference type="Reactome" id="R-DDI-881907">
    <property type="pathway name" value="Gastrin-CREB signalling pathway via PKC and MAPK"/>
</dbReference>
<dbReference type="PRO" id="PR:Q8MYF1"/>
<dbReference type="Proteomes" id="UP000002195">
    <property type="component" value="Chromosome 2"/>
</dbReference>
<dbReference type="GO" id="GO:0005737">
    <property type="term" value="C:cytoplasm"/>
    <property type="evidence" value="ECO:0000318"/>
    <property type="project" value="GO_Central"/>
</dbReference>
<dbReference type="GO" id="GO:0005524">
    <property type="term" value="F:ATP binding"/>
    <property type="evidence" value="ECO:0007669"/>
    <property type="project" value="UniProtKB-KW"/>
</dbReference>
<dbReference type="GO" id="GO:0106310">
    <property type="term" value="F:protein serine kinase activity"/>
    <property type="evidence" value="ECO:0007669"/>
    <property type="project" value="RHEA"/>
</dbReference>
<dbReference type="GO" id="GO:0004674">
    <property type="term" value="F:protein serine/threonine kinase activity"/>
    <property type="evidence" value="ECO:0000318"/>
    <property type="project" value="GO_Central"/>
</dbReference>
<dbReference type="CDD" id="cd05123">
    <property type="entry name" value="STKc_AGC"/>
    <property type="match status" value="1"/>
</dbReference>
<dbReference type="FunFam" id="3.30.200.20:FF:000042">
    <property type="entry name" value="Aurora kinase A"/>
    <property type="match status" value="1"/>
</dbReference>
<dbReference type="FunFam" id="1.10.510.10:FF:000297">
    <property type="entry name" value="Non-specific serine/threonine protein kinase"/>
    <property type="match status" value="1"/>
</dbReference>
<dbReference type="Gene3D" id="3.30.200.20">
    <property type="entry name" value="Phosphorylase Kinase, domain 1"/>
    <property type="match status" value="1"/>
</dbReference>
<dbReference type="Gene3D" id="1.10.510.10">
    <property type="entry name" value="Transferase(Phosphotransferase) domain 1"/>
    <property type="match status" value="1"/>
</dbReference>
<dbReference type="InterPro" id="IPR000961">
    <property type="entry name" value="AGC-kinase_C"/>
</dbReference>
<dbReference type="InterPro" id="IPR011009">
    <property type="entry name" value="Kinase-like_dom_sf"/>
</dbReference>
<dbReference type="InterPro" id="IPR000719">
    <property type="entry name" value="Prot_kinase_dom"/>
</dbReference>
<dbReference type="InterPro" id="IPR017441">
    <property type="entry name" value="Protein_kinase_ATP_BS"/>
</dbReference>
<dbReference type="InterPro" id="IPR008271">
    <property type="entry name" value="Ser/Thr_kinase_AS"/>
</dbReference>
<dbReference type="InterPro" id="IPR045270">
    <property type="entry name" value="STKc_AGC"/>
</dbReference>
<dbReference type="PANTHER" id="PTHR24351">
    <property type="entry name" value="RIBOSOMAL PROTEIN S6 KINASE"/>
    <property type="match status" value="1"/>
</dbReference>
<dbReference type="Pfam" id="PF00069">
    <property type="entry name" value="Pkinase"/>
    <property type="match status" value="1"/>
</dbReference>
<dbReference type="SMART" id="SM00133">
    <property type="entry name" value="S_TK_X"/>
    <property type="match status" value="1"/>
</dbReference>
<dbReference type="SMART" id="SM00220">
    <property type="entry name" value="S_TKc"/>
    <property type="match status" value="1"/>
</dbReference>
<dbReference type="SUPFAM" id="SSF56112">
    <property type="entry name" value="Protein kinase-like (PK-like)"/>
    <property type="match status" value="1"/>
</dbReference>
<dbReference type="PROSITE" id="PS51285">
    <property type="entry name" value="AGC_KINASE_CTER"/>
    <property type="match status" value="1"/>
</dbReference>
<dbReference type="PROSITE" id="PS00107">
    <property type="entry name" value="PROTEIN_KINASE_ATP"/>
    <property type="match status" value="1"/>
</dbReference>
<dbReference type="PROSITE" id="PS50011">
    <property type="entry name" value="PROTEIN_KINASE_DOM"/>
    <property type="match status" value="1"/>
</dbReference>
<dbReference type="PROSITE" id="PS00108">
    <property type="entry name" value="PROTEIN_KINASE_ST"/>
    <property type="match status" value="1"/>
</dbReference>
<organism>
    <name type="scientific">Dictyostelium discoideum</name>
    <name type="common">Social amoeba</name>
    <dbReference type="NCBI Taxonomy" id="44689"/>
    <lineage>
        <taxon>Eukaryota</taxon>
        <taxon>Amoebozoa</taxon>
        <taxon>Evosea</taxon>
        <taxon>Eumycetozoa</taxon>
        <taxon>Dictyostelia</taxon>
        <taxon>Dictyosteliales</taxon>
        <taxon>Dictyosteliaceae</taxon>
        <taxon>Dictyostelium</taxon>
    </lineage>
</organism>
<name>Y2070_DICDI</name>
<evidence type="ECO:0000255" key="1">
    <source>
        <dbReference type="PROSITE-ProRule" id="PRU00159"/>
    </source>
</evidence>
<evidence type="ECO:0000255" key="2">
    <source>
        <dbReference type="PROSITE-ProRule" id="PRU00618"/>
    </source>
</evidence>
<evidence type="ECO:0000255" key="3">
    <source>
        <dbReference type="PROSITE-ProRule" id="PRU10027"/>
    </source>
</evidence>
<evidence type="ECO:0000256" key="4">
    <source>
        <dbReference type="SAM" id="MobiDB-lite"/>
    </source>
</evidence>
<evidence type="ECO:0000305" key="5"/>
<keyword id="KW-0067">ATP-binding</keyword>
<keyword id="KW-0418">Kinase</keyword>
<keyword id="KW-0547">Nucleotide-binding</keyword>
<keyword id="KW-0597">Phosphoprotein</keyword>
<keyword id="KW-1185">Reference proteome</keyword>
<keyword id="KW-0723">Serine/threonine-protein kinase</keyword>
<keyword id="KW-0808">Transferase</keyword>
<gene>
    <name type="ORF">DDB_G0277449</name>
</gene>
<feature type="chain" id="PRO_0000358902" description="Probable serine/threonine-protein kinase DDB_G0277449">
    <location>
        <begin position="1"/>
        <end position="456"/>
    </location>
</feature>
<feature type="domain" description="Protein kinase" evidence="1">
    <location>
        <begin position="128"/>
        <end position="383"/>
    </location>
</feature>
<feature type="domain" description="AGC-kinase C-terminal" evidence="2">
    <location>
        <begin position="384"/>
        <end position="455"/>
    </location>
</feature>
<feature type="region of interest" description="Disordered" evidence="4">
    <location>
        <begin position="50"/>
        <end position="84"/>
    </location>
</feature>
<feature type="compositionally biased region" description="Low complexity" evidence="4">
    <location>
        <begin position="50"/>
        <end position="83"/>
    </location>
</feature>
<feature type="active site" description="Proton acceptor" evidence="1 3">
    <location>
        <position position="251"/>
    </location>
</feature>
<feature type="binding site" evidence="1">
    <location>
        <begin position="134"/>
        <end position="142"/>
    </location>
    <ligand>
        <name>ATP</name>
        <dbReference type="ChEBI" id="CHEBI:30616"/>
    </ligand>
</feature>
<feature type="binding site" evidence="1">
    <location>
        <position position="157"/>
    </location>
    <ligand>
        <name>ATP</name>
        <dbReference type="ChEBI" id="CHEBI:30616"/>
    </ligand>
</feature>
<reference key="1">
    <citation type="journal article" date="2002" name="Nature">
        <title>Sequence and analysis of chromosome 2 of Dictyostelium discoideum.</title>
        <authorList>
            <person name="Gloeckner G."/>
            <person name="Eichinger L."/>
            <person name="Szafranski K."/>
            <person name="Pachebat J.A."/>
            <person name="Bankier A.T."/>
            <person name="Dear P.H."/>
            <person name="Lehmann R."/>
            <person name="Baumgart C."/>
            <person name="Parra G."/>
            <person name="Abril J.F."/>
            <person name="Guigo R."/>
            <person name="Kumpf K."/>
            <person name="Tunggal B."/>
            <person name="Cox E.C."/>
            <person name="Quail M.A."/>
            <person name="Platzer M."/>
            <person name="Rosenthal A."/>
            <person name="Noegel A.A."/>
        </authorList>
    </citation>
    <scope>NUCLEOTIDE SEQUENCE [LARGE SCALE GENOMIC DNA]</scope>
    <source>
        <strain>AX4</strain>
    </source>
</reference>
<reference key="2">
    <citation type="journal article" date="2005" name="Nature">
        <title>The genome of the social amoeba Dictyostelium discoideum.</title>
        <authorList>
            <person name="Eichinger L."/>
            <person name="Pachebat J.A."/>
            <person name="Gloeckner G."/>
            <person name="Rajandream M.A."/>
            <person name="Sucgang R."/>
            <person name="Berriman M."/>
            <person name="Song J."/>
            <person name="Olsen R."/>
            <person name="Szafranski K."/>
            <person name="Xu Q."/>
            <person name="Tunggal B."/>
            <person name="Kummerfeld S."/>
            <person name="Madera M."/>
            <person name="Konfortov B.A."/>
            <person name="Rivero F."/>
            <person name="Bankier A.T."/>
            <person name="Lehmann R."/>
            <person name="Hamlin N."/>
            <person name="Davies R."/>
            <person name="Gaudet P."/>
            <person name="Fey P."/>
            <person name="Pilcher K."/>
            <person name="Chen G."/>
            <person name="Saunders D."/>
            <person name="Sodergren E.J."/>
            <person name="Davis P."/>
            <person name="Kerhornou A."/>
            <person name="Nie X."/>
            <person name="Hall N."/>
            <person name="Anjard C."/>
            <person name="Hemphill L."/>
            <person name="Bason N."/>
            <person name="Farbrother P."/>
            <person name="Desany B."/>
            <person name="Just E."/>
            <person name="Morio T."/>
            <person name="Rost R."/>
            <person name="Churcher C.M."/>
            <person name="Cooper J."/>
            <person name="Haydock S."/>
            <person name="van Driessche N."/>
            <person name="Cronin A."/>
            <person name="Goodhead I."/>
            <person name="Muzny D.M."/>
            <person name="Mourier T."/>
            <person name="Pain A."/>
            <person name="Lu M."/>
            <person name="Harper D."/>
            <person name="Lindsay R."/>
            <person name="Hauser H."/>
            <person name="James K.D."/>
            <person name="Quiles M."/>
            <person name="Madan Babu M."/>
            <person name="Saito T."/>
            <person name="Buchrieser C."/>
            <person name="Wardroper A."/>
            <person name="Felder M."/>
            <person name="Thangavelu M."/>
            <person name="Johnson D."/>
            <person name="Knights A."/>
            <person name="Loulseged H."/>
            <person name="Mungall K.L."/>
            <person name="Oliver K."/>
            <person name="Price C."/>
            <person name="Quail M.A."/>
            <person name="Urushihara H."/>
            <person name="Hernandez J."/>
            <person name="Rabbinowitsch E."/>
            <person name="Steffen D."/>
            <person name="Sanders M."/>
            <person name="Ma J."/>
            <person name="Kohara Y."/>
            <person name="Sharp S."/>
            <person name="Simmonds M.N."/>
            <person name="Spiegler S."/>
            <person name="Tivey A."/>
            <person name="Sugano S."/>
            <person name="White B."/>
            <person name="Walker D."/>
            <person name="Woodward J.R."/>
            <person name="Winckler T."/>
            <person name="Tanaka Y."/>
            <person name="Shaulsky G."/>
            <person name="Schleicher M."/>
            <person name="Weinstock G.M."/>
            <person name="Rosenthal A."/>
            <person name="Cox E.C."/>
            <person name="Chisholm R.L."/>
            <person name="Gibbs R.A."/>
            <person name="Loomis W.F."/>
            <person name="Platzer M."/>
            <person name="Kay R.R."/>
            <person name="Williams J.G."/>
            <person name="Dear P.H."/>
            <person name="Noegel A.A."/>
            <person name="Barrell B.G."/>
            <person name="Kuspa A."/>
        </authorList>
    </citation>
    <scope>NUCLEOTIDE SEQUENCE [LARGE SCALE GENOMIC DNA]</scope>
    <source>
        <strain>AX4</strain>
    </source>
</reference>
<proteinExistence type="inferred from homology"/>
<protein>
    <recommendedName>
        <fullName>Probable serine/threonine-protein kinase DDB_G0277449</fullName>
        <ecNumber>2.7.11.1</ecNumber>
    </recommendedName>
</protein>
<sequence>MTTTISSNLPSQLEISPTKLLITKQPIKLRESTESPFKSMMDTFKNTIISTSPTECEESSSSTITTPSEESLSSGEESSSISDSESKIITIATLLKPSNSVQDFTPLCNGAQETEIVKISNSINLSNFIIKHLVGKGGFGKVFQVVHVDTQKVYALKVIKKNHIIAKKSVVNTLAEKDILKKISHPFIVNLHYAFQNEKKLYLVMDFVNGGQLFYHLQKEAIFSEDQVRFYMAELILALEHLHDSNIVHRDLKPENILLDSQGHCILTDFGLAKLEVKTNNETFSFAGTLEYMAPEMIQHATCGKAVDWWSIGILMYDMMIGKPPFEHKNRALMQEKIISEKAKFPKFVSSSARSLINGLLTKDPTKRLGANGAIEIKRHPFFKSIQWRKIENKEITPPFVPSTKGIDDISNFDHASLKAHQRDSFSTSPTLSSSQQAYFDGFSFVRTPVLLESQK</sequence>